<protein>
    <recommendedName>
        <fullName evidence="6 7">FMRFamide-like neuropeptide APGQDFMRF-amide</fullName>
    </recommendedName>
</protein>
<dbReference type="GO" id="GO:0005576">
    <property type="term" value="C:extracellular region"/>
    <property type="evidence" value="ECO:0007669"/>
    <property type="project" value="UniProtKB-SubCell"/>
</dbReference>
<dbReference type="GO" id="GO:0007218">
    <property type="term" value="P:neuropeptide signaling pathway"/>
    <property type="evidence" value="ECO:0007669"/>
    <property type="project" value="UniProtKB-KW"/>
</dbReference>
<name>FAR6_DELRA</name>
<evidence type="ECO:0000250" key="1">
    <source>
        <dbReference type="UniProtKB" id="P41855"/>
    </source>
</evidence>
<evidence type="ECO:0000250" key="2">
    <source>
        <dbReference type="UniProtKB" id="P41860"/>
    </source>
</evidence>
<evidence type="ECO:0000255" key="3"/>
<evidence type="ECO:0000269" key="4">
    <source>
    </source>
</evidence>
<evidence type="ECO:0000269" key="5">
    <source>
    </source>
</evidence>
<evidence type="ECO:0000303" key="6">
    <source>
    </source>
</evidence>
<evidence type="ECO:0000303" key="7">
    <source>
    </source>
</evidence>
<evidence type="ECO:0000305" key="8"/>
<feature type="peptide" id="PRO_0000419706" description="FMRFamide-like neuropeptide APGQDFMRF-amide" evidence="4 5">
    <location>
        <begin position="1"/>
        <end position="9"/>
    </location>
</feature>
<feature type="modified residue" description="Phenylalanine amide" evidence="4 5">
    <location>
        <position position="9"/>
    </location>
</feature>
<comment type="function">
    <text evidence="1">FMRFamides and FMRFamide-like peptides are neuropeptides.</text>
</comment>
<comment type="subcellular location">
    <subcellularLocation>
        <location evidence="2">Secreted</location>
    </subcellularLocation>
</comment>
<comment type="tissue specificity">
    <text evidence="4 5">In larvae, expressed in the CNS and thoracic perisymapthetic organs (tPSO) but not in the ring gland or abdominal perisymapthetic organs (aPSO) (at protein level). In adults, expressed in brain and thoracic-abdominal ganglion but not in corpora cardiaca and corpora allata (at protein level).</text>
</comment>
<comment type="developmental stage">
    <text evidence="4 5">Detected in larvae and adults.</text>
</comment>
<comment type="mass spectrometry"/>
<comment type="mass spectrometry"/>
<comment type="similarity">
    <text evidence="3">Belongs to the FARP (FMRFamide related peptide) family.</text>
</comment>
<proteinExistence type="evidence at protein level"/>
<keyword id="KW-0027">Amidation</keyword>
<keyword id="KW-0903">Direct protein sequencing</keyword>
<keyword id="KW-0527">Neuropeptide</keyword>
<keyword id="KW-0964">Secreted</keyword>
<sequence>APGQDFMRF</sequence>
<organism>
    <name type="scientific">Delia radicum</name>
    <name type="common">Cabbage root fly</name>
    <name type="synonym">Anthomyia brassicae</name>
    <dbReference type="NCBI Taxonomy" id="30064"/>
    <lineage>
        <taxon>Eukaryota</taxon>
        <taxon>Metazoa</taxon>
        <taxon>Ecdysozoa</taxon>
        <taxon>Arthropoda</taxon>
        <taxon>Hexapoda</taxon>
        <taxon>Insecta</taxon>
        <taxon>Pterygota</taxon>
        <taxon>Neoptera</taxon>
        <taxon>Endopterygota</taxon>
        <taxon>Diptera</taxon>
        <taxon>Brachycera</taxon>
        <taxon>Muscomorpha</taxon>
        <taxon>Muscoidea</taxon>
        <taxon>Anthomyiidae</taxon>
        <taxon>Anthomyiinae</taxon>
        <taxon>Delia</taxon>
    </lineage>
</organism>
<accession>B3EWK2</accession>
<reference evidence="8" key="1">
    <citation type="journal article" date="2011" name="Peptides">
        <title>Neuropeptides associated with the central nervous system of the cabbage root fly, Delia radicum (L).</title>
        <authorList>
            <person name="Audsley N."/>
            <person name="Matthews H.J."/>
            <person name="Down R.E."/>
            <person name="Weaver R.J."/>
        </authorList>
    </citation>
    <scope>PROTEIN SEQUENCE</scope>
    <scope>TISSUE SPECIFICITY</scope>
    <scope>MASS SPECTROMETRY</scope>
    <scope>AMIDATION AT PHE-9</scope>
    <source>
        <tissue evidence="4">Abdominal ganglion</tissue>
        <tissue evidence="4">Brain</tissue>
        <tissue evidence="4">Corpora allata</tissue>
        <tissue evidence="4">Corpora cardiaca</tissue>
    </source>
</reference>
<reference evidence="8" key="2">
    <citation type="journal article" date="2012" name="PLoS ONE">
        <title>Peptidomics of the agriculturally damaging larval stage of the cabbage root fly Delia radicum (Diptera: Anthomyiidae).</title>
        <authorList>
            <person name="Zoephel J."/>
            <person name="Reiher W."/>
            <person name="Rexer K.-H."/>
            <person name="Kahnt J."/>
            <person name="Wegener C."/>
        </authorList>
    </citation>
    <scope>PROTEIN SEQUENCE</scope>
    <scope>TISSUE SPECIFICITY</scope>
    <scope>DEVELOPMENTAL STAGE</scope>
    <scope>MASS SPECTROMETRY</scope>
    <scope>AMIDATION AT PHE-9</scope>
    <source>
        <tissue evidence="5">CNS</tissue>
    </source>
</reference>